<sequence length="89" mass="10095">MSITAERKAEVIQGNANKAGDTGSPEVQVAILSERIANLTAHFKTHTKDNHSRRGLLKLVSTRRSLLDYVKKKDEARYKALLEKHNIRR</sequence>
<accession>Q2J2J5</accession>
<protein>
    <recommendedName>
        <fullName evidence="1">Small ribosomal subunit protein uS15</fullName>
    </recommendedName>
    <alternativeName>
        <fullName evidence="3">30S ribosomal protein S15</fullName>
    </alternativeName>
</protein>
<proteinExistence type="inferred from homology"/>
<comment type="function">
    <text evidence="1">One of the primary rRNA binding proteins, it binds directly to 16S rRNA where it helps nucleate assembly of the platform of the 30S subunit by binding and bridging several RNA helices of the 16S rRNA.</text>
</comment>
<comment type="function">
    <text evidence="1">Forms an intersubunit bridge (bridge B4) with the 23S rRNA of the 50S subunit in the ribosome.</text>
</comment>
<comment type="subunit">
    <text evidence="1">Part of the 30S ribosomal subunit. Forms a bridge to the 50S subunit in the 70S ribosome, contacting the 23S rRNA.</text>
</comment>
<comment type="similarity">
    <text evidence="1">Belongs to the universal ribosomal protein uS15 family.</text>
</comment>
<gene>
    <name evidence="1" type="primary">rpsO</name>
    <name type="ordered locus">RPB_0604</name>
</gene>
<name>RS15_RHOP2</name>
<keyword id="KW-1185">Reference proteome</keyword>
<keyword id="KW-0687">Ribonucleoprotein</keyword>
<keyword id="KW-0689">Ribosomal protein</keyword>
<keyword id="KW-0694">RNA-binding</keyword>
<keyword id="KW-0699">rRNA-binding</keyword>
<dbReference type="EMBL" id="CP000250">
    <property type="protein sequence ID" value="ABD05315.1"/>
    <property type="molecule type" value="Genomic_DNA"/>
</dbReference>
<dbReference type="RefSeq" id="WP_011439505.1">
    <property type="nucleotide sequence ID" value="NC_007778.1"/>
</dbReference>
<dbReference type="SMR" id="Q2J2J5"/>
<dbReference type="STRING" id="316058.RPB_0604"/>
<dbReference type="KEGG" id="rpb:RPB_0604"/>
<dbReference type="eggNOG" id="COG0184">
    <property type="taxonomic scope" value="Bacteria"/>
</dbReference>
<dbReference type="HOGENOM" id="CLU_148518_0_0_5"/>
<dbReference type="OrthoDB" id="9799262at2"/>
<dbReference type="Proteomes" id="UP000008809">
    <property type="component" value="Chromosome"/>
</dbReference>
<dbReference type="GO" id="GO:0022627">
    <property type="term" value="C:cytosolic small ribosomal subunit"/>
    <property type="evidence" value="ECO:0007669"/>
    <property type="project" value="TreeGrafter"/>
</dbReference>
<dbReference type="GO" id="GO:0019843">
    <property type="term" value="F:rRNA binding"/>
    <property type="evidence" value="ECO:0007669"/>
    <property type="project" value="UniProtKB-UniRule"/>
</dbReference>
<dbReference type="GO" id="GO:0003735">
    <property type="term" value="F:structural constituent of ribosome"/>
    <property type="evidence" value="ECO:0007669"/>
    <property type="project" value="InterPro"/>
</dbReference>
<dbReference type="GO" id="GO:0006412">
    <property type="term" value="P:translation"/>
    <property type="evidence" value="ECO:0007669"/>
    <property type="project" value="UniProtKB-UniRule"/>
</dbReference>
<dbReference type="CDD" id="cd00353">
    <property type="entry name" value="Ribosomal_S15p_S13e"/>
    <property type="match status" value="1"/>
</dbReference>
<dbReference type="FunFam" id="1.10.287.10:FF:000002">
    <property type="entry name" value="30S ribosomal protein S15"/>
    <property type="match status" value="1"/>
</dbReference>
<dbReference type="Gene3D" id="6.10.250.3130">
    <property type="match status" value="1"/>
</dbReference>
<dbReference type="Gene3D" id="1.10.287.10">
    <property type="entry name" value="S15/NS1, RNA-binding"/>
    <property type="match status" value="1"/>
</dbReference>
<dbReference type="HAMAP" id="MF_01343_B">
    <property type="entry name" value="Ribosomal_uS15_B"/>
    <property type="match status" value="1"/>
</dbReference>
<dbReference type="InterPro" id="IPR000589">
    <property type="entry name" value="Ribosomal_uS15"/>
</dbReference>
<dbReference type="InterPro" id="IPR005290">
    <property type="entry name" value="Ribosomal_uS15_bac-type"/>
</dbReference>
<dbReference type="InterPro" id="IPR009068">
    <property type="entry name" value="uS15_NS1_RNA-bd_sf"/>
</dbReference>
<dbReference type="NCBIfam" id="TIGR00952">
    <property type="entry name" value="S15_bact"/>
    <property type="match status" value="1"/>
</dbReference>
<dbReference type="PANTHER" id="PTHR23321">
    <property type="entry name" value="RIBOSOMAL PROTEIN S15, BACTERIAL AND ORGANELLAR"/>
    <property type="match status" value="1"/>
</dbReference>
<dbReference type="PANTHER" id="PTHR23321:SF26">
    <property type="entry name" value="SMALL RIBOSOMAL SUBUNIT PROTEIN US15M"/>
    <property type="match status" value="1"/>
</dbReference>
<dbReference type="Pfam" id="PF00312">
    <property type="entry name" value="Ribosomal_S15"/>
    <property type="match status" value="1"/>
</dbReference>
<dbReference type="SMART" id="SM01387">
    <property type="entry name" value="Ribosomal_S15"/>
    <property type="match status" value="1"/>
</dbReference>
<dbReference type="SUPFAM" id="SSF47060">
    <property type="entry name" value="S15/NS1 RNA-binding domain"/>
    <property type="match status" value="1"/>
</dbReference>
<dbReference type="PROSITE" id="PS00362">
    <property type="entry name" value="RIBOSOMAL_S15"/>
    <property type="match status" value="1"/>
</dbReference>
<evidence type="ECO:0000255" key="1">
    <source>
        <dbReference type="HAMAP-Rule" id="MF_01343"/>
    </source>
</evidence>
<evidence type="ECO:0000256" key="2">
    <source>
        <dbReference type="SAM" id="MobiDB-lite"/>
    </source>
</evidence>
<evidence type="ECO:0000305" key="3"/>
<feature type="chain" id="PRO_0000255523" description="Small ribosomal subunit protein uS15">
    <location>
        <begin position="1"/>
        <end position="89"/>
    </location>
</feature>
<feature type="region of interest" description="Disordered" evidence="2">
    <location>
        <begin position="1"/>
        <end position="24"/>
    </location>
</feature>
<feature type="compositionally biased region" description="Basic and acidic residues" evidence="2">
    <location>
        <begin position="1"/>
        <end position="10"/>
    </location>
</feature>
<reference key="1">
    <citation type="submission" date="2006-01" db="EMBL/GenBank/DDBJ databases">
        <title>Complete sequence of Rhodopseudomonas palustris HaA2.</title>
        <authorList>
            <consortium name="US DOE Joint Genome Institute"/>
            <person name="Copeland A."/>
            <person name="Lucas S."/>
            <person name="Lapidus A."/>
            <person name="Barry K."/>
            <person name="Detter J.C."/>
            <person name="Glavina T."/>
            <person name="Hammon N."/>
            <person name="Israni S."/>
            <person name="Pitluck S."/>
            <person name="Chain P."/>
            <person name="Malfatti S."/>
            <person name="Shin M."/>
            <person name="Vergez L."/>
            <person name="Schmutz J."/>
            <person name="Larimer F."/>
            <person name="Land M."/>
            <person name="Hauser L."/>
            <person name="Pelletier D.A."/>
            <person name="Kyrpides N."/>
            <person name="Anderson I."/>
            <person name="Oda Y."/>
            <person name="Harwood C.S."/>
            <person name="Richardson P."/>
        </authorList>
    </citation>
    <scope>NUCLEOTIDE SEQUENCE [LARGE SCALE GENOMIC DNA]</scope>
    <source>
        <strain>HaA2</strain>
    </source>
</reference>
<organism>
    <name type="scientific">Rhodopseudomonas palustris (strain HaA2)</name>
    <dbReference type="NCBI Taxonomy" id="316058"/>
    <lineage>
        <taxon>Bacteria</taxon>
        <taxon>Pseudomonadati</taxon>
        <taxon>Pseudomonadota</taxon>
        <taxon>Alphaproteobacteria</taxon>
        <taxon>Hyphomicrobiales</taxon>
        <taxon>Nitrobacteraceae</taxon>
        <taxon>Rhodopseudomonas</taxon>
    </lineage>
</organism>